<evidence type="ECO:0000256" key="1">
    <source>
        <dbReference type="SAM" id="MobiDB-lite"/>
    </source>
</evidence>
<evidence type="ECO:0000269" key="2">
    <source>
    </source>
</evidence>
<evidence type="ECO:0000305" key="3"/>
<evidence type="ECO:0000305" key="4">
    <source>
    </source>
</evidence>
<evidence type="ECO:0000312" key="5">
    <source>
        <dbReference type="HGNC" id="HGNC:55138"/>
    </source>
</evidence>
<comment type="function">
    <text evidence="2">Together with HAPSTR1 plays a central regulatory role in the cellular response to molecular stressors, such as DNA damage, nutrient scarcity, and protein misfolding (PubMed:36631436). Regulates these multiple stress response signaling pathways by stabilizing HAPSTR1, but also independently of HAPSTR1 (PubMed:36631436).</text>
</comment>
<comment type="subunit">
    <text evidence="2">Homooligomer (PubMed:36631436). Heterooligomer with HAPSTR1; the interaction is direct and stabilizes HAPSTR1 independently of HUWE1 (PubMed:36631436). Interacts with HUWE1 (PubMed:36631436).</text>
</comment>
<comment type="subcellular location">
    <subcellularLocation>
        <location evidence="2">Nucleus</location>
    </subcellularLocation>
</comment>
<comment type="tissue specificity">
    <text evidence="2">Expressed in a tissue-restricted manner compared to HAPSTR1.</text>
</comment>
<comment type="similarity">
    <text evidence="3">Belongs to the HAPSTR1 family.</text>
</comment>
<name>HAPR2_HUMAN</name>
<accession>A0A7P0TBJ1</accession>
<keyword id="KW-0539">Nucleus</keyword>
<keyword id="KW-1267">Proteomics identification</keyword>
<keyword id="KW-1185">Reference proteome</keyword>
<gene>
    <name evidence="5" type="primary">HAPSTR2</name>
</gene>
<dbReference type="EMBL" id="AL589987">
    <property type="status" value="NOT_ANNOTATED_CDS"/>
    <property type="molecule type" value="Genomic_DNA"/>
</dbReference>
<dbReference type="CCDS" id="CCDS94678.1"/>
<dbReference type="RefSeq" id="NP_001258489.1">
    <property type="nucleotide sequence ID" value="NM_001271560.3"/>
</dbReference>
<dbReference type="FunCoup" id="A0A7P0TBJ1">
    <property type="interactions" value="381"/>
</dbReference>
<dbReference type="PeptideAtlas" id="A0A7P0TBJ1"/>
<dbReference type="Ensembl" id="ENST00000453380.3">
    <property type="protein sequence ID" value="ENSP00000506518.1"/>
    <property type="gene ID" value="ENSG00000230707.3"/>
</dbReference>
<dbReference type="GeneID" id="389895"/>
<dbReference type="KEGG" id="hsa:389895"/>
<dbReference type="MANE-Select" id="ENST00000453380.3">
    <property type="protein sequence ID" value="ENSP00000506518.1"/>
    <property type="RefSeq nucleotide sequence ID" value="NM_001271560.3"/>
    <property type="RefSeq protein sequence ID" value="NP_001258489.1"/>
</dbReference>
<dbReference type="AGR" id="HGNC:55138"/>
<dbReference type="CTD" id="389895"/>
<dbReference type="GeneCards" id="HAPSTR2"/>
<dbReference type="HGNC" id="HGNC:55138">
    <property type="gene designation" value="HAPSTR2"/>
</dbReference>
<dbReference type="OpenTargets" id="ENSG00000230707"/>
<dbReference type="GeneTree" id="ENSGT00390000002886"/>
<dbReference type="InParanoid" id="A0A7P0TBJ1"/>
<dbReference type="OrthoDB" id="5823474at2759"/>
<dbReference type="PRO" id="PR:A0A7P0TBJ1"/>
<dbReference type="Proteomes" id="UP000005640">
    <property type="component" value="Chromosome X"/>
</dbReference>
<dbReference type="Bgee" id="ENSG00000230707">
    <property type="expression patterns" value="Expressed in primordial germ cell in gonad and 77 other cell types or tissues"/>
</dbReference>
<dbReference type="GO" id="GO:0005634">
    <property type="term" value="C:nucleus"/>
    <property type="evidence" value="ECO:0000314"/>
    <property type="project" value="UniProtKB"/>
</dbReference>
<dbReference type="GO" id="GO:0031625">
    <property type="term" value="F:ubiquitin protein ligase binding"/>
    <property type="evidence" value="ECO:0000353"/>
    <property type="project" value="UniProtKB"/>
</dbReference>
<dbReference type="GO" id="GO:0050821">
    <property type="term" value="P:protein stabilization"/>
    <property type="evidence" value="ECO:0000315"/>
    <property type="project" value="UniProtKB"/>
</dbReference>
<dbReference type="InterPro" id="IPR040308">
    <property type="entry name" value="HAPR1"/>
</dbReference>
<dbReference type="InterPro" id="IPR029196">
    <property type="entry name" value="HAPSTR1-like"/>
</dbReference>
<dbReference type="PANTHER" id="PTHR31624:SF2">
    <property type="entry name" value="HUWE1-ASSOCIATED PROTEIN MODIFYING STRESS RESPONSES 2"/>
    <property type="match status" value="1"/>
</dbReference>
<dbReference type="PANTHER" id="PTHR31624">
    <property type="entry name" value="UPF0472 PROTEIN C16ORF72"/>
    <property type="match status" value="1"/>
</dbReference>
<dbReference type="Pfam" id="PF15251">
    <property type="entry name" value="TAPR1-like"/>
    <property type="match status" value="1"/>
</dbReference>
<proteinExistence type="evidence at protein level"/>
<sequence length="273" mass="30054">MEEQQKEGEAEVAEHWFSKWERQCLAEAEQEEQLPPELQEEAAAELAGLKSEKQKLWHLFQISATAVAQLYKDSGCQQQGLSMWDPFQNAAMAVTSLYKESGDAHQRSFDLGVQVGHQRRIKDVLEWVKKGRSTIRREDLISFLCGKVPPAPPPPRTPRTPPKPPTGVTSQAVATESSSSVDVDLQPFQEAIALHGLSGAMAGISMRSGDSPQDSGVASSGRRKTSFLEDDLNPFDSEELALHLDSGGIRKRTSAQCSDGITDSPIQKRNRMV</sequence>
<organism>
    <name type="scientific">Homo sapiens</name>
    <name type="common">Human</name>
    <dbReference type="NCBI Taxonomy" id="9606"/>
    <lineage>
        <taxon>Eukaryota</taxon>
        <taxon>Metazoa</taxon>
        <taxon>Chordata</taxon>
        <taxon>Craniata</taxon>
        <taxon>Vertebrata</taxon>
        <taxon>Euteleostomi</taxon>
        <taxon>Mammalia</taxon>
        <taxon>Eutheria</taxon>
        <taxon>Euarchontoglires</taxon>
        <taxon>Primates</taxon>
        <taxon>Haplorrhini</taxon>
        <taxon>Catarrhini</taxon>
        <taxon>Hominidae</taxon>
        <taxon>Homo</taxon>
    </lineage>
</organism>
<reference key="1">
    <citation type="journal article" date="2005" name="Nature">
        <title>The DNA sequence of the human X chromosome.</title>
        <authorList>
            <person name="Ross M.T."/>
            <person name="Grafham D.V."/>
            <person name="Coffey A.J."/>
            <person name="Scherer S."/>
            <person name="McLay K."/>
            <person name="Muzny D."/>
            <person name="Platzer M."/>
            <person name="Howell G.R."/>
            <person name="Burrows C."/>
            <person name="Bird C.P."/>
            <person name="Frankish A."/>
            <person name="Lovell F.L."/>
            <person name="Howe K.L."/>
            <person name="Ashurst J.L."/>
            <person name="Fulton R.S."/>
            <person name="Sudbrak R."/>
            <person name="Wen G."/>
            <person name="Jones M.C."/>
            <person name="Hurles M.E."/>
            <person name="Andrews T.D."/>
            <person name="Scott C.E."/>
            <person name="Searle S."/>
            <person name="Ramser J."/>
            <person name="Whittaker A."/>
            <person name="Deadman R."/>
            <person name="Carter N.P."/>
            <person name="Hunt S.E."/>
            <person name="Chen R."/>
            <person name="Cree A."/>
            <person name="Gunaratne P."/>
            <person name="Havlak P."/>
            <person name="Hodgson A."/>
            <person name="Metzker M.L."/>
            <person name="Richards S."/>
            <person name="Scott G."/>
            <person name="Steffen D."/>
            <person name="Sodergren E."/>
            <person name="Wheeler D.A."/>
            <person name="Worley K.C."/>
            <person name="Ainscough R."/>
            <person name="Ambrose K.D."/>
            <person name="Ansari-Lari M.A."/>
            <person name="Aradhya S."/>
            <person name="Ashwell R.I."/>
            <person name="Babbage A.K."/>
            <person name="Bagguley C.L."/>
            <person name="Ballabio A."/>
            <person name="Banerjee R."/>
            <person name="Barker G.E."/>
            <person name="Barlow K.F."/>
            <person name="Barrett I.P."/>
            <person name="Bates K.N."/>
            <person name="Beare D.M."/>
            <person name="Beasley H."/>
            <person name="Beasley O."/>
            <person name="Beck A."/>
            <person name="Bethel G."/>
            <person name="Blechschmidt K."/>
            <person name="Brady N."/>
            <person name="Bray-Allen S."/>
            <person name="Bridgeman A.M."/>
            <person name="Brown A.J."/>
            <person name="Brown M.J."/>
            <person name="Bonnin D."/>
            <person name="Bruford E.A."/>
            <person name="Buhay C."/>
            <person name="Burch P."/>
            <person name="Burford D."/>
            <person name="Burgess J."/>
            <person name="Burrill W."/>
            <person name="Burton J."/>
            <person name="Bye J.M."/>
            <person name="Carder C."/>
            <person name="Carrel L."/>
            <person name="Chako J."/>
            <person name="Chapman J.C."/>
            <person name="Chavez D."/>
            <person name="Chen E."/>
            <person name="Chen G."/>
            <person name="Chen Y."/>
            <person name="Chen Z."/>
            <person name="Chinault C."/>
            <person name="Ciccodicola A."/>
            <person name="Clark S.Y."/>
            <person name="Clarke G."/>
            <person name="Clee C.M."/>
            <person name="Clegg S."/>
            <person name="Clerc-Blankenburg K."/>
            <person name="Clifford K."/>
            <person name="Cobley V."/>
            <person name="Cole C.G."/>
            <person name="Conquer J.S."/>
            <person name="Corby N."/>
            <person name="Connor R.E."/>
            <person name="David R."/>
            <person name="Davies J."/>
            <person name="Davis C."/>
            <person name="Davis J."/>
            <person name="Delgado O."/>
            <person name="Deshazo D."/>
            <person name="Dhami P."/>
            <person name="Ding Y."/>
            <person name="Dinh H."/>
            <person name="Dodsworth S."/>
            <person name="Draper H."/>
            <person name="Dugan-Rocha S."/>
            <person name="Dunham A."/>
            <person name="Dunn M."/>
            <person name="Durbin K.J."/>
            <person name="Dutta I."/>
            <person name="Eades T."/>
            <person name="Ellwood M."/>
            <person name="Emery-Cohen A."/>
            <person name="Errington H."/>
            <person name="Evans K.L."/>
            <person name="Faulkner L."/>
            <person name="Francis F."/>
            <person name="Frankland J."/>
            <person name="Fraser A.E."/>
            <person name="Galgoczy P."/>
            <person name="Gilbert J."/>
            <person name="Gill R."/>
            <person name="Gloeckner G."/>
            <person name="Gregory S.G."/>
            <person name="Gribble S."/>
            <person name="Griffiths C."/>
            <person name="Grocock R."/>
            <person name="Gu Y."/>
            <person name="Gwilliam R."/>
            <person name="Hamilton C."/>
            <person name="Hart E.A."/>
            <person name="Hawes A."/>
            <person name="Heath P.D."/>
            <person name="Heitmann K."/>
            <person name="Hennig S."/>
            <person name="Hernandez J."/>
            <person name="Hinzmann B."/>
            <person name="Ho S."/>
            <person name="Hoffs M."/>
            <person name="Howden P.J."/>
            <person name="Huckle E.J."/>
            <person name="Hume J."/>
            <person name="Hunt P.J."/>
            <person name="Hunt A.R."/>
            <person name="Isherwood J."/>
            <person name="Jacob L."/>
            <person name="Johnson D."/>
            <person name="Jones S."/>
            <person name="de Jong P.J."/>
            <person name="Joseph S.S."/>
            <person name="Keenan S."/>
            <person name="Kelly S."/>
            <person name="Kershaw J.K."/>
            <person name="Khan Z."/>
            <person name="Kioschis P."/>
            <person name="Klages S."/>
            <person name="Knights A.J."/>
            <person name="Kosiura A."/>
            <person name="Kovar-Smith C."/>
            <person name="Laird G.K."/>
            <person name="Langford C."/>
            <person name="Lawlor S."/>
            <person name="Leversha M."/>
            <person name="Lewis L."/>
            <person name="Liu W."/>
            <person name="Lloyd C."/>
            <person name="Lloyd D.M."/>
            <person name="Loulseged H."/>
            <person name="Loveland J.E."/>
            <person name="Lovell J.D."/>
            <person name="Lozado R."/>
            <person name="Lu J."/>
            <person name="Lyne R."/>
            <person name="Ma J."/>
            <person name="Maheshwari M."/>
            <person name="Matthews L.H."/>
            <person name="McDowall J."/>
            <person name="McLaren S."/>
            <person name="McMurray A."/>
            <person name="Meidl P."/>
            <person name="Meitinger T."/>
            <person name="Milne S."/>
            <person name="Miner G."/>
            <person name="Mistry S.L."/>
            <person name="Morgan M."/>
            <person name="Morris S."/>
            <person name="Mueller I."/>
            <person name="Mullikin J.C."/>
            <person name="Nguyen N."/>
            <person name="Nordsiek G."/>
            <person name="Nyakatura G."/>
            <person name="O'dell C.N."/>
            <person name="Okwuonu G."/>
            <person name="Palmer S."/>
            <person name="Pandian R."/>
            <person name="Parker D."/>
            <person name="Parrish J."/>
            <person name="Pasternak S."/>
            <person name="Patel D."/>
            <person name="Pearce A.V."/>
            <person name="Pearson D.M."/>
            <person name="Pelan S.E."/>
            <person name="Perez L."/>
            <person name="Porter K.M."/>
            <person name="Ramsey Y."/>
            <person name="Reichwald K."/>
            <person name="Rhodes S."/>
            <person name="Ridler K.A."/>
            <person name="Schlessinger D."/>
            <person name="Schueler M.G."/>
            <person name="Sehra H.K."/>
            <person name="Shaw-Smith C."/>
            <person name="Shen H."/>
            <person name="Sheridan E.M."/>
            <person name="Shownkeen R."/>
            <person name="Skuce C.D."/>
            <person name="Smith M.L."/>
            <person name="Sotheran E.C."/>
            <person name="Steingruber H.E."/>
            <person name="Steward C.A."/>
            <person name="Storey R."/>
            <person name="Swann R.M."/>
            <person name="Swarbreck D."/>
            <person name="Tabor P.E."/>
            <person name="Taudien S."/>
            <person name="Taylor T."/>
            <person name="Teague B."/>
            <person name="Thomas K."/>
            <person name="Thorpe A."/>
            <person name="Timms K."/>
            <person name="Tracey A."/>
            <person name="Trevanion S."/>
            <person name="Tromans A.C."/>
            <person name="d'Urso M."/>
            <person name="Verduzco D."/>
            <person name="Villasana D."/>
            <person name="Waldron L."/>
            <person name="Wall M."/>
            <person name="Wang Q."/>
            <person name="Warren J."/>
            <person name="Warry G.L."/>
            <person name="Wei X."/>
            <person name="West A."/>
            <person name="Whitehead S.L."/>
            <person name="Whiteley M.N."/>
            <person name="Wilkinson J.E."/>
            <person name="Willey D.L."/>
            <person name="Williams G."/>
            <person name="Williams L."/>
            <person name="Williamson A."/>
            <person name="Williamson H."/>
            <person name="Wilming L."/>
            <person name="Woodmansey R.L."/>
            <person name="Wray P.W."/>
            <person name="Yen J."/>
            <person name="Zhang J."/>
            <person name="Zhou J."/>
            <person name="Zoghbi H."/>
            <person name="Zorilla S."/>
            <person name="Buck D."/>
            <person name="Reinhardt R."/>
            <person name="Poustka A."/>
            <person name="Rosenthal A."/>
            <person name="Lehrach H."/>
            <person name="Meindl A."/>
            <person name="Minx P.J."/>
            <person name="Hillier L.W."/>
            <person name="Willard H.F."/>
            <person name="Wilson R.K."/>
            <person name="Waterston R.H."/>
            <person name="Rice C.M."/>
            <person name="Vaudin M."/>
            <person name="Coulson A."/>
            <person name="Nelson D.L."/>
            <person name="Weinstock G."/>
            <person name="Sulston J.E."/>
            <person name="Durbin R.M."/>
            <person name="Hubbard T."/>
            <person name="Gibbs R.A."/>
            <person name="Beck S."/>
            <person name="Rogers J."/>
            <person name="Bentley D.R."/>
        </authorList>
    </citation>
    <scope>NUCLEOTIDE SEQUENCE [LARGE SCALE GENOMIC DNA]</scope>
</reference>
<reference key="2">
    <citation type="journal article" date="2023" name="Nat. Commun.">
        <title>The HAPSTR2 retrogene buffers stress signaling and resilience in mammals.</title>
        <authorList>
            <person name="Amici D.R."/>
            <person name="Cingoz H."/>
            <person name="Alasady M.J."/>
            <person name="Alhayek S."/>
            <person name="Phoumyvong C.M."/>
            <person name="Sahni N."/>
            <person name="Yi S.S."/>
            <person name="Mendillo M.L."/>
        </authorList>
    </citation>
    <scope>FUNCTION</scope>
    <scope>SUBUNIT</scope>
    <scope>INTERACTION WITH HAPSTR1 AND HUWE1</scope>
    <scope>SUBCELLULAR LOCATION</scope>
    <scope>TISSUE SPECIFICITY</scope>
    <scope>REGION</scope>
    <scope>MUTAGENESIS OF GLY-116</scope>
</reference>
<protein>
    <recommendedName>
        <fullName evidence="4">HUWE1-associated protein modifying stress responses 2</fullName>
    </recommendedName>
</protein>
<feature type="chain" id="PRO_0000457925" description="HUWE1-associated protein modifying stress responses 2">
    <location>
        <begin position="1"/>
        <end position="273"/>
    </location>
</feature>
<feature type="region of interest" description="Disordered" evidence="1">
    <location>
        <begin position="146"/>
        <end position="181"/>
    </location>
</feature>
<feature type="region of interest" description="Disordered" evidence="1">
    <location>
        <begin position="204"/>
        <end position="230"/>
    </location>
</feature>
<feature type="region of interest" description="Nuclear localization signal" evidence="2">
    <location>
        <begin position="249"/>
        <end position="273"/>
    </location>
</feature>
<feature type="region of interest" description="Disordered" evidence="1">
    <location>
        <begin position="251"/>
        <end position="273"/>
    </location>
</feature>
<feature type="compositionally biased region" description="Pro residues" evidence="1">
    <location>
        <begin position="149"/>
        <end position="165"/>
    </location>
</feature>
<feature type="compositionally biased region" description="Polar residues" evidence="1">
    <location>
        <begin position="170"/>
        <end position="181"/>
    </location>
</feature>
<feature type="compositionally biased region" description="Polar residues" evidence="1">
    <location>
        <begin position="208"/>
        <end position="218"/>
    </location>
</feature>
<feature type="compositionally biased region" description="Polar residues" evidence="1">
    <location>
        <begin position="254"/>
        <end position="267"/>
    </location>
</feature>
<feature type="mutagenesis site" description="Loss of homodimerization. Loss of heterodimerization with HAPSTR1. No effect on interaction with HUWE1." evidence="2">
    <original>G</original>
    <variation>R</variation>
    <location>
        <position position="116"/>
    </location>
</feature>